<evidence type="ECO:0000250" key="1">
    <source>
        <dbReference type="UniProtKB" id="P53040"/>
    </source>
</evidence>
<evidence type="ECO:0000255" key="2"/>
<evidence type="ECO:0000269" key="3">
    <source>
    </source>
</evidence>
<evidence type="ECO:0000269" key="4">
    <source>
    </source>
</evidence>
<evidence type="ECO:0000269" key="5">
    <source>
    </source>
</evidence>
<evidence type="ECO:0000269" key="6">
    <source>
    </source>
</evidence>
<evidence type="ECO:0000305" key="7"/>
<evidence type="ECO:0000312" key="8">
    <source>
        <dbReference type="EMBL" id="CAA20756.1"/>
    </source>
</evidence>
<evidence type="ECO:0000312" key="9">
    <source>
        <dbReference type="PomBase" id="SPCC16C4.18c"/>
    </source>
</evidence>
<feature type="chain" id="PRO_0000361054" description="SAGA complex/transcription factor TFIID complex subunit Taf6">
    <location>
        <begin position="1"/>
        <end position="452"/>
    </location>
</feature>
<feature type="domain" description="Histone-fold" evidence="2">
    <location>
        <begin position="4"/>
        <end position="68"/>
    </location>
</feature>
<sequence>MSLTVWNIESIKDVAEMLGIGNLADEPAAAIAMDLEYRIHQVVQEATKFMVHSKRTVLTSADISSALRTLNVEPLYGFNNSRPLEFHEAAVGAGQNSLYYLDDEEVDFEKIINAPLPKVPRNISYSAHWLAIEGVQPAIPQNPTPSDHTVGEWASKGTSGVMPGASTAAKEARNGVTSMDNVEIKPLVRHVLSKELQLYFERITSALLDETNVELRDAALSSLRDDPGLHQLLPYFIMFLSDSVTRNLGNLVVLTTLMHMAWALLDNPNLFVEPYVQQLMPSILTCLVAKRLGSDPNNHEHYALRDLAAFLLGIVCDRFGNVYYTLKPRVTRTALKAFLDNTKPYSTHYGAIKGLKTMGKEAIRVLVVPNIKVYEVLVRKTLEKGNEEEIYEANKCMDALYDALLLLRDDQLPNQRTLPPNASGLLEKNVGSLMAEKIMKENDTSLLLGLLE</sequence>
<name>TAF6_SCHPO</name>
<reference evidence="8" key="1">
    <citation type="journal article" date="2002" name="Nature">
        <title>The genome sequence of Schizosaccharomyces pombe.</title>
        <authorList>
            <person name="Wood V."/>
            <person name="Gwilliam R."/>
            <person name="Rajandream M.A."/>
            <person name="Lyne M.H."/>
            <person name="Lyne R."/>
            <person name="Stewart A."/>
            <person name="Sgouros J.G."/>
            <person name="Peat N."/>
            <person name="Hayles J."/>
            <person name="Baker S.G."/>
            <person name="Basham D."/>
            <person name="Bowman S."/>
            <person name="Brooks K."/>
            <person name="Brown D."/>
            <person name="Brown S."/>
            <person name="Chillingworth T."/>
            <person name="Churcher C.M."/>
            <person name="Collins M."/>
            <person name="Connor R."/>
            <person name="Cronin A."/>
            <person name="Davis P."/>
            <person name="Feltwell T."/>
            <person name="Fraser A."/>
            <person name="Gentles S."/>
            <person name="Goble A."/>
            <person name="Hamlin N."/>
            <person name="Harris D.E."/>
            <person name="Hidalgo J."/>
            <person name="Hodgson G."/>
            <person name="Holroyd S."/>
            <person name="Hornsby T."/>
            <person name="Howarth S."/>
            <person name="Huckle E.J."/>
            <person name="Hunt S."/>
            <person name="Jagels K."/>
            <person name="James K.D."/>
            <person name="Jones L."/>
            <person name="Jones M."/>
            <person name="Leather S."/>
            <person name="McDonald S."/>
            <person name="McLean J."/>
            <person name="Mooney P."/>
            <person name="Moule S."/>
            <person name="Mungall K.L."/>
            <person name="Murphy L.D."/>
            <person name="Niblett D."/>
            <person name="Odell C."/>
            <person name="Oliver K."/>
            <person name="O'Neil S."/>
            <person name="Pearson D."/>
            <person name="Quail M.A."/>
            <person name="Rabbinowitsch E."/>
            <person name="Rutherford K.M."/>
            <person name="Rutter S."/>
            <person name="Saunders D."/>
            <person name="Seeger K."/>
            <person name="Sharp S."/>
            <person name="Skelton J."/>
            <person name="Simmonds M.N."/>
            <person name="Squares R."/>
            <person name="Squares S."/>
            <person name="Stevens K."/>
            <person name="Taylor K."/>
            <person name="Taylor R.G."/>
            <person name="Tivey A."/>
            <person name="Walsh S.V."/>
            <person name="Warren T."/>
            <person name="Whitehead S."/>
            <person name="Woodward J.R."/>
            <person name="Volckaert G."/>
            <person name="Aert R."/>
            <person name="Robben J."/>
            <person name="Grymonprez B."/>
            <person name="Weltjens I."/>
            <person name="Vanstreels E."/>
            <person name="Rieger M."/>
            <person name="Schaefer M."/>
            <person name="Mueller-Auer S."/>
            <person name="Gabel C."/>
            <person name="Fuchs M."/>
            <person name="Duesterhoeft A."/>
            <person name="Fritzc C."/>
            <person name="Holzer E."/>
            <person name="Moestl D."/>
            <person name="Hilbert H."/>
            <person name="Borzym K."/>
            <person name="Langer I."/>
            <person name="Beck A."/>
            <person name="Lehrach H."/>
            <person name="Reinhardt R."/>
            <person name="Pohl T.M."/>
            <person name="Eger P."/>
            <person name="Zimmermann W."/>
            <person name="Wedler H."/>
            <person name="Wambutt R."/>
            <person name="Purnelle B."/>
            <person name="Goffeau A."/>
            <person name="Cadieu E."/>
            <person name="Dreano S."/>
            <person name="Gloux S."/>
            <person name="Lelaure V."/>
            <person name="Mottier S."/>
            <person name="Galibert F."/>
            <person name="Aves S.J."/>
            <person name="Xiang Z."/>
            <person name="Hunt C."/>
            <person name="Moore K."/>
            <person name="Hurst S.M."/>
            <person name="Lucas M."/>
            <person name="Rochet M."/>
            <person name="Gaillardin C."/>
            <person name="Tallada V.A."/>
            <person name="Garzon A."/>
            <person name="Thode G."/>
            <person name="Daga R.R."/>
            <person name="Cruzado L."/>
            <person name="Jimenez J."/>
            <person name="Sanchez M."/>
            <person name="del Rey F."/>
            <person name="Benito J."/>
            <person name="Dominguez A."/>
            <person name="Revuelta J.L."/>
            <person name="Moreno S."/>
            <person name="Armstrong J."/>
            <person name="Forsburg S.L."/>
            <person name="Cerutti L."/>
            <person name="Lowe T."/>
            <person name="McCombie W.R."/>
            <person name="Paulsen I."/>
            <person name="Potashkin J."/>
            <person name="Shpakovski G.V."/>
            <person name="Ussery D."/>
            <person name="Barrell B.G."/>
            <person name="Nurse P."/>
        </authorList>
    </citation>
    <scope>NUCLEOTIDE SEQUENCE [LARGE SCALE GENOMIC DNA]</scope>
    <source>
        <strain>972 / ATCC 24843</strain>
    </source>
</reference>
<reference evidence="7" key="2">
    <citation type="journal article" date="2002" name="Nucleic Acids Res.">
        <title>Identification of histone H4-like TAF in Schizosaccharomyces pombe as a protein that interacts with WD repeat-containing TAF.</title>
        <authorList>
            <person name="Mitsuzawa H."/>
            <person name="Ishihama A."/>
        </authorList>
    </citation>
    <scope>INTERACTION WITH GCN5; TAF5 AND TAF73</scope>
    <scope>DISRUPTION PHENOTYPE</scope>
</reference>
<reference evidence="7" key="3">
    <citation type="journal article" date="2006" name="Nat. Biotechnol.">
        <title>ORFeome cloning and global analysis of protein localization in the fission yeast Schizosaccharomyces pombe.</title>
        <authorList>
            <person name="Matsuyama A."/>
            <person name="Arai R."/>
            <person name="Yashiroda Y."/>
            <person name="Shirai A."/>
            <person name="Kamata A."/>
            <person name="Sekido S."/>
            <person name="Kobayashi Y."/>
            <person name="Hashimoto A."/>
            <person name="Hamamoto M."/>
            <person name="Hiraoka Y."/>
            <person name="Horinouchi S."/>
            <person name="Yoshida M."/>
        </authorList>
    </citation>
    <scope>SUBCELLULAR LOCATION [LARGE SCALE ANALYSIS]</scope>
</reference>
<reference key="4">
    <citation type="journal article" date="2008" name="Genes Dev.">
        <title>The S. pombe SAGA complex controls the switch from proliferation to sexual differentiation through the opposing roles of its subunits Gcn5 and Spt8.</title>
        <authorList>
            <person name="Helmlinger D."/>
            <person name="Marguerat S."/>
            <person name="Villen J."/>
            <person name="Gygi S.P."/>
            <person name="Bahler J."/>
            <person name="Winston F."/>
        </authorList>
    </citation>
    <scope>IDENTIFICATION IN THE SAGA COMPLEX</scope>
    <scope>IDENTIFICATION BY MASS SPECTROMETRY</scope>
</reference>
<reference key="5">
    <citation type="journal article" date="2009" name="Structure">
        <title>Cryo-EM reveals promoter DNA binding and conformational flexibility of the general transcription factor TFIID.</title>
        <authorList>
            <person name="Elmlund H."/>
            <person name="Baraznenok V."/>
            <person name="Linder T."/>
            <person name="Szilagyi Z."/>
            <person name="Rofougaran R."/>
            <person name="Hofer A."/>
            <person name="Hebert H."/>
            <person name="Lindahl M."/>
            <person name="Gustafsson C.M."/>
        </authorList>
    </citation>
    <scope>STRUCTURE BY ELECTRON MICROSCOPY OF TFIID</scope>
</reference>
<protein>
    <recommendedName>
        <fullName>SAGA complex/transcription factor TFIID complex subunit Taf6</fullName>
    </recommendedName>
    <alternativeName>
        <fullName evidence="1">TBP-associated factor 50 kDa</fullName>
        <shortName evidence="1">TAFII-50</shortName>
        <shortName evidence="1">TAFII50</shortName>
    </alternativeName>
    <alternativeName>
        <fullName evidence="1">TBP-associated factor 6</fullName>
    </alternativeName>
    <alternativeName>
        <fullName evidence="1">Transcription initiation factor TFIID subunit 6</fullName>
    </alternativeName>
</protein>
<organism>
    <name type="scientific">Schizosaccharomyces pombe (strain 972 / ATCC 24843)</name>
    <name type="common">Fission yeast</name>
    <dbReference type="NCBI Taxonomy" id="284812"/>
    <lineage>
        <taxon>Eukaryota</taxon>
        <taxon>Fungi</taxon>
        <taxon>Dikarya</taxon>
        <taxon>Ascomycota</taxon>
        <taxon>Taphrinomycotina</taxon>
        <taxon>Schizosaccharomycetes</taxon>
        <taxon>Schizosaccharomycetales</taxon>
        <taxon>Schizosaccharomycetaceae</taxon>
        <taxon>Schizosaccharomyces</taxon>
    </lineage>
</organism>
<keyword id="KW-0539">Nucleus</keyword>
<keyword id="KW-1185">Reference proteome</keyword>
<keyword id="KW-0804">Transcription</keyword>
<keyword id="KW-0805">Transcription regulation</keyword>
<dbReference type="EMBL" id="CU329672">
    <property type="protein sequence ID" value="CAA20756.1"/>
    <property type="molecule type" value="Genomic_DNA"/>
</dbReference>
<dbReference type="PIR" id="T41108">
    <property type="entry name" value="T41108"/>
</dbReference>
<dbReference type="RefSeq" id="NP_587928.1">
    <property type="nucleotide sequence ID" value="NM_001022919.2"/>
</dbReference>
<dbReference type="SMR" id="O74462"/>
<dbReference type="BioGRID" id="275705">
    <property type="interactions" value="12"/>
</dbReference>
<dbReference type="FunCoup" id="O74462">
    <property type="interactions" value="527"/>
</dbReference>
<dbReference type="IntAct" id="O74462">
    <property type="interactions" value="2"/>
</dbReference>
<dbReference type="MINT" id="O74462"/>
<dbReference type="STRING" id="284812.O74462"/>
<dbReference type="iPTMnet" id="O74462"/>
<dbReference type="PaxDb" id="4896-SPCC16C4.18c.1"/>
<dbReference type="EnsemblFungi" id="SPCC16C4.18c.1">
    <property type="protein sequence ID" value="SPCC16C4.18c.1:pep"/>
    <property type="gene ID" value="SPCC16C4.18c"/>
</dbReference>
<dbReference type="GeneID" id="2539133"/>
<dbReference type="KEGG" id="spo:2539133"/>
<dbReference type="PomBase" id="SPCC16C4.18c">
    <property type="gene designation" value="taf6"/>
</dbReference>
<dbReference type="VEuPathDB" id="FungiDB:SPCC16C4.18c"/>
<dbReference type="eggNOG" id="KOG2549">
    <property type="taxonomic scope" value="Eukaryota"/>
</dbReference>
<dbReference type="HOGENOM" id="CLU_021711_3_0_1"/>
<dbReference type="InParanoid" id="O74462"/>
<dbReference type="OMA" id="YFVQFIA"/>
<dbReference type="PhylomeDB" id="O74462"/>
<dbReference type="Reactome" id="R-SPO-674695">
    <property type="pathway name" value="RNA Polymerase II Pre-transcription Events"/>
</dbReference>
<dbReference type="Reactome" id="R-SPO-6807505">
    <property type="pathway name" value="RNA polymerase II transcribes snRNA genes"/>
</dbReference>
<dbReference type="Reactome" id="R-SPO-73776">
    <property type="pathway name" value="RNA Polymerase II Promoter Escape"/>
</dbReference>
<dbReference type="Reactome" id="R-SPO-73779">
    <property type="pathway name" value="RNA Polymerase II Transcription Pre-Initiation And Promoter Opening"/>
</dbReference>
<dbReference type="Reactome" id="R-SPO-75953">
    <property type="pathway name" value="RNA Polymerase II Transcription Initiation"/>
</dbReference>
<dbReference type="Reactome" id="R-SPO-76042">
    <property type="pathway name" value="RNA Polymerase II Transcription Initiation And Promoter Clearance"/>
</dbReference>
<dbReference type="PRO" id="PR:O74462"/>
<dbReference type="Proteomes" id="UP000002485">
    <property type="component" value="Chromosome III"/>
</dbReference>
<dbReference type="GO" id="GO:0005829">
    <property type="term" value="C:cytosol"/>
    <property type="evidence" value="ECO:0007005"/>
    <property type="project" value="PomBase"/>
</dbReference>
<dbReference type="GO" id="GO:0005634">
    <property type="term" value="C:nucleus"/>
    <property type="evidence" value="ECO:0007005"/>
    <property type="project" value="PomBase"/>
</dbReference>
<dbReference type="GO" id="GO:0000124">
    <property type="term" value="C:SAGA complex"/>
    <property type="evidence" value="ECO:0000314"/>
    <property type="project" value="PomBase"/>
</dbReference>
<dbReference type="GO" id="GO:0005669">
    <property type="term" value="C:transcription factor TFIID complex"/>
    <property type="evidence" value="ECO:0000314"/>
    <property type="project" value="PomBase"/>
</dbReference>
<dbReference type="GO" id="GO:0046982">
    <property type="term" value="F:protein heterodimerization activity"/>
    <property type="evidence" value="ECO:0007669"/>
    <property type="project" value="InterPro"/>
</dbReference>
<dbReference type="GO" id="GO:0016251">
    <property type="term" value="F:RNA polymerase II general transcription initiation factor activity"/>
    <property type="evidence" value="ECO:0000269"/>
    <property type="project" value="PomBase"/>
</dbReference>
<dbReference type="GO" id="GO:0003713">
    <property type="term" value="F:transcription coactivator activity"/>
    <property type="evidence" value="ECO:0000318"/>
    <property type="project" value="GO_Central"/>
</dbReference>
<dbReference type="GO" id="GO:0051123">
    <property type="term" value="P:RNA polymerase II preinitiation complex assembly"/>
    <property type="evidence" value="ECO:0000318"/>
    <property type="project" value="GO_Central"/>
</dbReference>
<dbReference type="GO" id="GO:0006367">
    <property type="term" value="P:transcription initiation at RNA polymerase II promoter"/>
    <property type="evidence" value="ECO:0000269"/>
    <property type="project" value="PomBase"/>
</dbReference>
<dbReference type="GO" id="GO:0045815">
    <property type="term" value="P:transcription initiation-coupled chromatin remodeling"/>
    <property type="evidence" value="ECO:0000305"/>
    <property type="project" value="PomBase"/>
</dbReference>
<dbReference type="CDD" id="cd22931">
    <property type="entry name" value="HFD_TAF6"/>
    <property type="match status" value="1"/>
</dbReference>
<dbReference type="CDD" id="cd08050">
    <property type="entry name" value="TAF6C"/>
    <property type="match status" value="1"/>
</dbReference>
<dbReference type="FunFam" id="1.10.20.10:FF:000033">
    <property type="entry name" value="Transcription initiation factor TFIID complex subunit"/>
    <property type="match status" value="1"/>
</dbReference>
<dbReference type="FunFam" id="1.25.40.770:FF:000001">
    <property type="entry name" value="Transcription initiation factor TFIID subunit 6"/>
    <property type="match status" value="1"/>
</dbReference>
<dbReference type="Gene3D" id="1.10.20.10">
    <property type="entry name" value="Histone, subunit A"/>
    <property type="match status" value="1"/>
</dbReference>
<dbReference type="Gene3D" id="1.25.40.770">
    <property type="entry name" value="TAF6, C-terminal HEAT repeat domain"/>
    <property type="match status" value="1"/>
</dbReference>
<dbReference type="InterPro" id="IPR016024">
    <property type="entry name" value="ARM-type_fold"/>
</dbReference>
<dbReference type="InterPro" id="IPR009072">
    <property type="entry name" value="Histone-fold"/>
</dbReference>
<dbReference type="InterPro" id="IPR037796">
    <property type="entry name" value="TAF6"/>
</dbReference>
<dbReference type="InterPro" id="IPR011442">
    <property type="entry name" value="TAF6_C"/>
</dbReference>
<dbReference type="InterPro" id="IPR046344">
    <property type="entry name" value="TAF6_C_sf"/>
</dbReference>
<dbReference type="InterPro" id="IPR004823">
    <property type="entry name" value="TAF_TATA-bd_Histone-like_dom"/>
</dbReference>
<dbReference type="PANTHER" id="PTHR10221">
    <property type="entry name" value="TRANSCRIPTION INITIATION FACTOR TFIID SUBUNIT 6"/>
    <property type="match status" value="1"/>
</dbReference>
<dbReference type="PANTHER" id="PTHR10221:SF9">
    <property type="entry name" value="TRANSCRIPTION INITIATION FACTOR TFIID SUBUNIT 6"/>
    <property type="match status" value="1"/>
</dbReference>
<dbReference type="Pfam" id="PF02969">
    <property type="entry name" value="TAF"/>
    <property type="match status" value="1"/>
</dbReference>
<dbReference type="Pfam" id="PF07571">
    <property type="entry name" value="TAF6_C"/>
    <property type="match status" value="1"/>
</dbReference>
<dbReference type="SMART" id="SM00803">
    <property type="entry name" value="TAF"/>
    <property type="match status" value="1"/>
</dbReference>
<dbReference type="SUPFAM" id="SSF48371">
    <property type="entry name" value="ARM repeat"/>
    <property type="match status" value="1"/>
</dbReference>
<dbReference type="SUPFAM" id="SSF47113">
    <property type="entry name" value="Histone-fold"/>
    <property type="match status" value="1"/>
</dbReference>
<accession>O74462</accession>
<gene>
    <name evidence="9" type="primary">taf6</name>
    <name evidence="8" type="synonym">taf50</name>
    <name type="ORF">SPCC16C4.18c</name>
</gene>
<comment type="function">
    <text evidence="1">Functions as a component of both the DNA-binding general transcription initiation factor complex TFIID and the transcription coactivator SAGA complex. Binding of TFIID to a promoter (with or without TATA element) is the initial step in pre-initiation complex (PIC) formation. TFIID plays a key role in the regulation of gene expression by RNA polymerase II through different activities such as transcription activator interaction, core promoter recognition and selectivity, TFIIA and TFIIB interaction, chromatin modification (histone acetylation by TAF1), facilitation of DNA opening and initiation of transcription. SAGA acts as a general cofactor required for essentially all RNA polymerase II transcription. At the promoters, SAGA is required for transcription pre-initiation complex (PIC) recruitment. It influences RNA polymerase II transcriptional activity through different activities such as TBP interaction (via core/TAF module) and promoter selectivity, interaction with transcription activators (via Tra1/SPT module), and chromatin modification through histone acetylation (via HAT module) and deubiquitination (via DUB module). SAGA preferentially acetylates histones H3 (to form H3K9ac, H3K14ac, H3K18ac and H3K23ac) and H2B and deubiquitinates histone H2B. SAGA interacts with DNA via upstream activating sequences (UASs).</text>
</comment>
<comment type="subunit">
    <text evidence="1 3 5 6">Component of the 1.8 MDa SAGA (Spt-Ada-Gcn5 acetyltransferase) complex, which is composed of 19 subunits tra1, spt7, taf5, ngg1/ada3, sgf73, spt20, spt8, taf12, taf6, hfi1/ada1, ubp8, gcn5, ada2, spt3, sgf29, taf10, taf9, sgf11 and sus1 (PubMed:19056896). The SAGA complex is composed of 4 modules, namely the HAT (histone acetyltransferase) module (gcn5, ada2, ngg1/ada3 and sgf29), the DUB (deubiquitinating) module (ubp8, sgf11, sgf73 and sus1), the core or TAF (TBP-associated factor) module (taf5, taf6, taf9, taf10 and taf12), and the Tra1 or SPT (Suppressor of Ty) module (tra1, hfi1/ada1, spt3, spt7, spt8 and spt20). The Tra1/SPT module binds activators, the core module recruits TBP (TATA-binding protein), the HAT module contains the histone H3 acetyltransferase gcn5, and the DUB module comprises the histone H2B deubiquitinase ubp8 (By similarity). Interacts with gcn5, taf5 and taf73 (PubMed:11972332). Component of the 1.2 MDa TFIID complex, which is composed of TATA-binding protein (TBP) and the 14 TBP-associated factors (TAFs) (PubMed:19913479). It comprises 1 copy of each taf1, taf2, taf3, taf7, taf8, taf11, taf13, 2 copies of each taf4, taf5, taf6, taf9, taf10, taf12, and 3 copies of taf14. In TFIID, taf6 heterodimerizes with taf9, forming ultimately an octamer consisting of a taf6-taf9 heterotetramer core flanked by taf4-taf12 dimers on either side, similar to the histone H2A-H2B-H3-H4 octamer (By similarity).</text>
</comment>
<comment type="subcellular location">
    <subcellularLocation>
        <location evidence="4">Nucleus</location>
    </subcellularLocation>
</comment>
<comment type="domain">
    <text evidence="1">The histone-fold domain (HFD) is required for interaction with taf9.</text>
</comment>
<comment type="domain">
    <text evidence="1">The C-terminal HEAT domain is required for bulk transcriptional elongation.</text>
</comment>
<comment type="disruption phenotype">
    <text evidence="3">Cells lacking taf6 are not viable.</text>
</comment>
<comment type="similarity">
    <text evidence="2">Belongs to the TAF6 family.</text>
</comment>
<proteinExistence type="evidence at protein level"/>